<keyword id="KW-0046">Antibiotic resistance</keyword>
<keyword id="KW-0997">Cell inner membrane</keyword>
<keyword id="KW-1003">Cell membrane</keyword>
<keyword id="KW-0133">Cell shape</keyword>
<keyword id="KW-0961">Cell wall biogenesis/degradation</keyword>
<keyword id="KW-0378">Hydrolase</keyword>
<keyword id="KW-0472">Membrane</keyword>
<keyword id="KW-0573">Peptidoglycan synthesis</keyword>
<keyword id="KW-0812">Transmembrane</keyword>
<keyword id="KW-1133">Transmembrane helix</keyword>
<organism>
    <name type="scientific">Burkholderia thailandensis (strain ATCC 700388 / DSM 13276 / CCUG 48851 / CIP 106301 / E264)</name>
    <dbReference type="NCBI Taxonomy" id="271848"/>
    <lineage>
        <taxon>Bacteria</taxon>
        <taxon>Pseudomonadati</taxon>
        <taxon>Pseudomonadota</taxon>
        <taxon>Betaproteobacteria</taxon>
        <taxon>Burkholderiales</taxon>
        <taxon>Burkholderiaceae</taxon>
        <taxon>Burkholderia</taxon>
        <taxon>pseudomallei group</taxon>
    </lineage>
</organism>
<reference key="1">
    <citation type="journal article" date="2005" name="BMC Genomics">
        <title>Bacterial genome adaptation to niches: divergence of the potential virulence genes in three Burkholderia species of different survival strategies.</title>
        <authorList>
            <person name="Kim H.S."/>
            <person name="Schell M.A."/>
            <person name="Yu Y."/>
            <person name="Ulrich R.L."/>
            <person name="Sarria S.H."/>
            <person name="Nierman W.C."/>
            <person name="DeShazer D."/>
        </authorList>
    </citation>
    <scope>NUCLEOTIDE SEQUENCE [LARGE SCALE GENOMIC DNA]</scope>
    <source>
        <strain>ATCC 700388 / DSM 13276 / CCUG 48851 / CIP 106301 / E264</strain>
    </source>
</reference>
<comment type="function">
    <text evidence="1">Catalyzes the dephosphorylation of undecaprenyl diphosphate (UPP). Confers resistance to bacitracin.</text>
</comment>
<comment type="catalytic activity">
    <reaction evidence="1">
        <text>di-trans,octa-cis-undecaprenyl diphosphate + H2O = di-trans,octa-cis-undecaprenyl phosphate + phosphate + H(+)</text>
        <dbReference type="Rhea" id="RHEA:28094"/>
        <dbReference type="ChEBI" id="CHEBI:15377"/>
        <dbReference type="ChEBI" id="CHEBI:15378"/>
        <dbReference type="ChEBI" id="CHEBI:43474"/>
        <dbReference type="ChEBI" id="CHEBI:58405"/>
        <dbReference type="ChEBI" id="CHEBI:60392"/>
        <dbReference type="EC" id="3.6.1.27"/>
    </reaction>
</comment>
<comment type="subcellular location">
    <subcellularLocation>
        <location evidence="1">Cell inner membrane</location>
        <topology evidence="1">Multi-pass membrane protein</topology>
    </subcellularLocation>
</comment>
<comment type="miscellaneous">
    <text>Bacitracin is thought to be involved in the inhibition of peptidoglycan synthesis by sequestering undecaprenyl diphosphate, thereby reducing the pool of lipid carrier available.</text>
</comment>
<comment type="similarity">
    <text evidence="1">Belongs to the UppP family.</text>
</comment>
<protein>
    <recommendedName>
        <fullName evidence="1">Undecaprenyl-diphosphatase 1</fullName>
        <ecNumber evidence="1">3.6.1.27</ecNumber>
    </recommendedName>
    <alternativeName>
        <fullName evidence="1">Bacitracin resistance protein 1</fullName>
    </alternativeName>
    <alternativeName>
        <fullName evidence="1">Undecaprenyl pyrophosphate phosphatase 1</fullName>
    </alternativeName>
</protein>
<name>UPPP1_BURTA</name>
<proteinExistence type="inferred from homology"/>
<feature type="chain" id="PRO_0000250228" description="Undecaprenyl-diphosphatase 1">
    <location>
        <begin position="1"/>
        <end position="276"/>
    </location>
</feature>
<feature type="transmembrane region" description="Helical" evidence="1">
    <location>
        <begin position="85"/>
        <end position="105"/>
    </location>
</feature>
<feature type="transmembrane region" description="Helical" evidence="1">
    <location>
        <begin position="108"/>
        <end position="128"/>
    </location>
</feature>
<feature type="transmembrane region" description="Helical" evidence="1">
    <location>
        <begin position="187"/>
        <end position="207"/>
    </location>
</feature>
<feature type="transmembrane region" description="Helical" evidence="1">
    <location>
        <begin position="217"/>
        <end position="237"/>
    </location>
</feature>
<feature type="transmembrane region" description="Helical" evidence="1">
    <location>
        <begin position="253"/>
        <end position="273"/>
    </location>
</feature>
<gene>
    <name evidence="1" type="primary">uppP1</name>
    <name type="ordered locus">BTH_I1512</name>
</gene>
<accession>Q2SYE1</accession>
<evidence type="ECO:0000255" key="1">
    <source>
        <dbReference type="HAMAP-Rule" id="MF_01006"/>
    </source>
</evidence>
<sequence>MDWILICKALALGIVEGLTEFLPVSSTGHLIVAGSFLRFHPEQAKTFDVVIQFGAILAVCWEYRRRIVDVVTGLPAQREARRFTMNVVIATLPAIALALLFEKTIKSVLFAPVPVAVALVVGGAVILWVEGRQRERGKPSRVQSIDALTPLDALKVGLAQCFALIPGVSRSGSTIIGGMLFGLERRVATEFSFFLAIPVIFGATLYETAKDWHAFNVDSIGLFAIGLAAAFVSAFACVRWLLRYVASHDFTAFAWYRIVFGLFVLLVGYSGWIEWI</sequence>
<dbReference type="EC" id="3.6.1.27" evidence="1"/>
<dbReference type="EMBL" id="CP000086">
    <property type="protein sequence ID" value="ABC37404.1"/>
    <property type="molecule type" value="Genomic_DNA"/>
</dbReference>
<dbReference type="RefSeq" id="WP_009889629.1">
    <property type="nucleotide sequence ID" value="NZ_CP008785.1"/>
</dbReference>
<dbReference type="SMR" id="Q2SYE1"/>
<dbReference type="GeneID" id="45121253"/>
<dbReference type="KEGG" id="bte:BTH_I1512"/>
<dbReference type="HOGENOM" id="CLU_060296_2_0_4"/>
<dbReference type="Proteomes" id="UP000001930">
    <property type="component" value="Chromosome I"/>
</dbReference>
<dbReference type="GO" id="GO:0005886">
    <property type="term" value="C:plasma membrane"/>
    <property type="evidence" value="ECO:0007669"/>
    <property type="project" value="UniProtKB-SubCell"/>
</dbReference>
<dbReference type="GO" id="GO:0050380">
    <property type="term" value="F:undecaprenyl-diphosphatase activity"/>
    <property type="evidence" value="ECO:0007669"/>
    <property type="project" value="UniProtKB-UniRule"/>
</dbReference>
<dbReference type="GO" id="GO:0071555">
    <property type="term" value="P:cell wall organization"/>
    <property type="evidence" value="ECO:0007669"/>
    <property type="project" value="UniProtKB-KW"/>
</dbReference>
<dbReference type="GO" id="GO:0009252">
    <property type="term" value="P:peptidoglycan biosynthetic process"/>
    <property type="evidence" value="ECO:0007669"/>
    <property type="project" value="UniProtKB-KW"/>
</dbReference>
<dbReference type="GO" id="GO:0008360">
    <property type="term" value="P:regulation of cell shape"/>
    <property type="evidence" value="ECO:0007669"/>
    <property type="project" value="UniProtKB-KW"/>
</dbReference>
<dbReference type="GO" id="GO:0046677">
    <property type="term" value="P:response to antibiotic"/>
    <property type="evidence" value="ECO:0007669"/>
    <property type="project" value="UniProtKB-UniRule"/>
</dbReference>
<dbReference type="HAMAP" id="MF_01006">
    <property type="entry name" value="Undec_diphosphatase"/>
    <property type="match status" value="1"/>
</dbReference>
<dbReference type="InterPro" id="IPR003824">
    <property type="entry name" value="UppP"/>
</dbReference>
<dbReference type="NCBIfam" id="NF001389">
    <property type="entry name" value="PRK00281.1-2"/>
    <property type="match status" value="1"/>
</dbReference>
<dbReference type="NCBIfam" id="NF001390">
    <property type="entry name" value="PRK00281.1-4"/>
    <property type="match status" value="1"/>
</dbReference>
<dbReference type="NCBIfam" id="TIGR00753">
    <property type="entry name" value="undec_PP_bacA"/>
    <property type="match status" value="1"/>
</dbReference>
<dbReference type="PANTHER" id="PTHR30622">
    <property type="entry name" value="UNDECAPRENYL-DIPHOSPHATASE"/>
    <property type="match status" value="1"/>
</dbReference>
<dbReference type="PANTHER" id="PTHR30622:SF3">
    <property type="entry name" value="UNDECAPRENYL-DIPHOSPHATASE"/>
    <property type="match status" value="1"/>
</dbReference>
<dbReference type="Pfam" id="PF02673">
    <property type="entry name" value="BacA"/>
    <property type="match status" value="1"/>
</dbReference>